<gene>
    <name type="primary">acoC</name>
    <name type="ordered locus">H16_B0146</name>
</gene>
<dbReference type="EC" id="2.3.1.12"/>
<dbReference type="EMBL" id="M66060">
    <property type="protein sequence ID" value="AAA21950.1"/>
    <property type="molecule type" value="Genomic_DNA"/>
</dbReference>
<dbReference type="EMBL" id="AM260480">
    <property type="protein sequence ID" value="CAJ94952.1"/>
    <property type="molecule type" value="Genomic_DNA"/>
</dbReference>
<dbReference type="RefSeq" id="WP_010813530.1">
    <property type="nucleotide sequence ID" value="NZ_CP039288.1"/>
</dbReference>
<dbReference type="SMR" id="P27747"/>
<dbReference type="STRING" id="381666.H16_B0146"/>
<dbReference type="ESTHER" id="cupnh-acoc">
    <property type="family name" value="AcoC_BiotinLipoyl-ABH"/>
</dbReference>
<dbReference type="MEROPS" id="S33.010"/>
<dbReference type="KEGG" id="reh:H16_B0146"/>
<dbReference type="eggNOG" id="COG0508">
    <property type="taxonomic scope" value="Bacteria"/>
</dbReference>
<dbReference type="eggNOG" id="COG0596">
    <property type="taxonomic scope" value="Bacteria"/>
</dbReference>
<dbReference type="HOGENOM" id="CLU_020336_13_2_4"/>
<dbReference type="OrthoDB" id="8562572at2"/>
<dbReference type="UniPathway" id="UPA00040"/>
<dbReference type="Proteomes" id="UP000008210">
    <property type="component" value="Chromosome 2"/>
</dbReference>
<dbReference type="GO" id="GO:0004742">
    <property type="term" value="F:dihydrolipoyllysine-residue acetyltransferase activity"/>
    <property type="evidence" value="ECO:0007669"/>
    <property type="project" value="UniProtKB-EC"/>
</dbReference>
<dbReference type="GO" id="GO:0045150">
    <property type="term" value="P:acetoin catabolic process"/>
    <property type="evidence" value="ECO:0007669"/>
    <property type="project" value="UniProtKB-UniPathway"/>
</dbReference>
<dbReference type="CDD" id="cd06849">
    <property type="entry name" value="lipoyl_domain"/>
    <property type="match status" value="1"/>
</dbReference>
<dbReference type="Gene3D" id="2.40.50.100">
    <property type="match status" value="1"/>
</dbReference>
<dbReference type="Gene3D" id="3.40.50.1820">
    <property type="entry name" value="alpha/beta hydrolase"/>
    <property type="match status" value="1"/>
</dbReference>
<dbReference type="InterPro" id="IPR003016">
    <property type="entry name" value="2-oxoA_DH_lipoyl-BS"/>
</dbReference>
<dbReference type="InterPro" id="IPR000073">
    <property type="entry name" value="AB_hydrolase_1"/>
</dbReference>
<dbReference type="InterPro" id="IPR029058">
    <property type="entry name" value="AB_hydrolase_fold"/>
</dbReference>
<dbReference type="InterPro" id="IPR000089">
    <property type="entry name" value="Biotin_lipoyl"/>
</dbReference>
<dbReference type="InterPro" id="IPR011053">
    <property type="entry name" value="Single_hybrid_motif"/>
</dbReference>
<dbReference type="NCBIfam" id="NF011457">
    <property type="entry name" value="PRK14875.1"/>
    <property type="match status" value="1"/>
</dbReference>
<dbReference type="PANTHER" id="PTHR43689:SF8">
    <property type="entry name" value="ALPHA_BETA-HYDROLASES SUPERFAMILY PROTEIN"/>
    <property type="match status" value="1"/>
</dbReference>
<dbReference type="PANTHER" id="PTHR43689">
    <property type="entry name" value="HYDROLASE"/>
    <property type="match status" value="1"/>
</dbReference>
<dbReference type="Pfam" id="PF00561">
    <property type="entry name" value="Abhydrolase_1"/>
    <property type="match status" value="1"/>
</dbReference>
<dbReference type="Pfam" id="PF00364">
    <property type="entry name" value="Biotin_lipoyl"/>
    <property type="match status" value="1"/>
</dbReference>
<dbReference type="PRINTS" id="PR00111">
    <property type="entry name" value="ABHYDROLASE"/>
</dbReference>
<dbReference type="SUPFAM" id="SSF53474">
    <property type="entry name" value="alpha/beta-Hydrolases"/>
    <property type="match status" value="1"/>
</dbReference>
<dbReference type="SUPFAM" id="SSF51230">
    <property type="entry name" value="Single hybrid motif"/>
    <property type="match status" value="1"/>
</dbReference>
<dbReference type="PROSITE" id="PS50968">
    <property type="entry name" value="BIOTINYL_LIPOYL"/>
    <property type="match status" value="1"/>
</dbReference>
<dbReference type="PROSITE" id="PS00189">
    <property type="entry name" value="LIPOYL"/>
    <property type="match status" value="1"/>
</dbReference>
<keyword id="KW-0006">Acetoin catabolism</keyword>
<keyword id="KW-0012">Acyltransferase</keyword>
<keyword id="KW-0903">Direct protein sequencing</keyword>
<keyword id="KW-0450">Lipoyl</keyword>
<keyword id="KW-1185">Reference proteome</keyword>
<keyword id="KW-0808">Transferase</keyword>
<reference key="1">
    <citation type="journal article" date="1991" name="J. Bacteriol.">
        <title>Identification and molecular characterization of the Alcaligenes eutrophus H16 aco operon genes involved in acetoin catabolism.</title>
        <authorList>
            <person name="Priefert H."/>
            <person name="Hein S."/>
            <person name="Krueger N."/>
            <person name="Zeh K."/>
            <person name="Schmidt B."/>
            <person name="Steinbuechel A."/>
        </authorList>
    </citation>
    <scope>NUCLEOTIDE SEQUENCE [GENOMIC DNA]</scope>
    <scope>PROTEIN SEQUENCE OF 2-28</scope>
</reference>
<reference key="2">
    <citation type="journal article" date="2006" name="Nat. Biotechnol.">
        <title>Genome sequence of the bioplastic-producing 'Knallgas' bacterium Ralstonia eutropha H16.</title>
        <authorList>
            <person name="Pohlmann A."/>
            <person name="Fricke W.F."/>
            <person name="Reinecke F."/>
            <person name="Kusian B."/>
            <person name="Liesegang H."/>
            <person name="Cramm R."/>
            <person name="Eitinger T."/>
            <person name="Ewering C."/>
            <person name="Poetter M."/>
            <person name="Schwartz E."/>
            <person name="Strittmatter A."/>
            <person name="Voss I."/>
            <person name="Gottschalk G."/>
            <person name="Steinbuechel A."/>
            <person name="Friedrich B."/>
            <person name="Bowien B."/>
        </authorList>
    </citation>
    <scope>NUCLEOTIDE SEQUENCE [LARGE SCALE GENOMIC DNA]</scope>
    <source>
        <strain>ATCC 17699 / DSM 428 / KCTC 22496 / NCIMB 10442 / H16 / Stanier 337</strain>
    </source>
</reference>
<comment type="function">
    <text>Dihydrolipoamide acetyltransferase involved in acetoin catabolism.</text>
</comment>
<comment type="catalytic activity">
    <reaction>
        <text>N(6)-[(R)-dihydrolipoyl]-L-lysyl-[protein] + acetyl-CoA = N(6)-[(R)-S(8)-acetyldihydrolipoyl]-L-lysyl-[protein] + CoA</text>
        <dbReference type="Rhea" id="RHEA:17017"/>
        <dbReference type="Rhea" id="RHEA-COMP:10475"/>
        <dbReference type="Rhea" id="RHEA-COMP:10478"/>
        <dbReference type="ChEBI" id="CHEBI:57287"/>
        <dbReference type="ChEBI" id="CHEBI:57288"/>
        <dbReference type="ChEBI" id="CHEBI:83100"/>
        <dbReference type="ChEBI" id="CHEBI:83111"/>
        <dbReference type="EC" id="2.3.1.12"/>
    </reaction>
</comment>
<comment type="cofactor">
    <cofactor evidence="1">
        <name>(R)-lipoate</name>
        <dbReference type="ChEBI" id="CHEBI:83088"/>
    </cofactor>
    <text evidence="1">Binds 1 lipoyl cofactor covalently.</text>
</comment>
<comment type="pathway">
    <text>Ketone degradation; acetoin degradation.</text>
</comment>
<comment type="induction">
    <text>By growth on acetoin.</text>
</comment>
<sequence>MATEISPTIIPIVMPKWGLSMKEGTVNAWLVDEGTEITVGLPILDVETDKIANAVEAPDAGTLRRKVAQAGDVLPVKALLGVLAPAEVSDAQIDDYVAAYETPADDAGEEDAAAAYQFADVDGIRVRYARKGGGAETVLFIHGFGGDLDNWLFNLDPLADAYTVVALDLPGHGQSSPRLAGTTLAQMAGFVARFMDETGIEAAHVVGHSMGGGVAAQLAVDAPQRVLSVALVSPVGFGDAVNSGYTEGFVSAQSRRELKPVVELLFADAGLVSRQMLDDLLRYKRLDGVTEALTALGQGLFGGGRQSEQPGQRLANSGKRVLVVWGGQDQIIPAAHAEAAPPGATVKVFADAGHMSQMEKANDFNALLKKHLGG</sequence>
<organism>
    <name type="scientific">Cupriavidus necator (strain ATCC 17699 / DSM 428 / KCTC 22496 / NCIMB 10442 / H16 / Stanier 337)</name>
    <name type="common">Ralstonia eutropha</name>
    <dbReference type="NCBI Taxonomy" id="381666"/>
    <lineage>
        <taxon>Bacteria</taxon>
        <taxon>Pseudomonadati</taxon>
        <taxon>Pseudomonadota</taxon>
        <taxon>Betaproteobacteria</taxon>
        <taxon>Burkholderiales</taxon>
        <taxon>Burkholderiaceae</taxon>
        <taxon>Cupriavidus</taxon>
    </lineage>
</organism>
<evidence type="ECO:0000250" key="1"/>
<evidence type="ECO:0000255" key="2"/>
<evidence type="ECO:0000255" key="3">
    <source>
        <dbReference type="PROSITE-ProRule" id="PRU01066"/>
    </source>
</evidence>
<evidence type="ECO:0000269" key="4">
    <source>
    </source>
</evidence>
<evidence type="ECO:0000305" key="5"/>
<accession>P27747</accession>
<accession>Q0K4X2</accession>
<protein>
    <recommendedName>
        <fullName>Dihydrolipoyllysine-residue acetyltransferase component of acetoin cleaving system</fullName>
        <ecNumber>2.3.1.12</ecNumber>
    </recommendedName>
    <alternativeName>
        <fullName>Acetoin dehydrogenase E2 component</fullName>
    </alternativeName>
    <alternativeName>
        <fullName>Dihydrolipoamide acetyltransferase component of acetoin cleaving system</fullName>
    </alternativeName>
    <alternativeName>
        <fullName>Fast-migrating protein</fullName>
        <shortName>FMP</shortName>
    </alternativeName>
</protein>
<feature type="initiator methionine" description="Removed" evidence="4">
    <location>
        <position position="1"/>
    </location>
</feature>
<feature type="chain" id="PRO_0000162304" description="Dihydrolipoyllysine-residue acetyltransferase component of acetoin cleaving system">
    <location>
        <begin position="2"/>
        <end position="374"/>
    </location>
</feature>
<feature type="domain" description="Lipoyl-binding" evidence="3">
    <location>
        <begin position="9"/>
        <end position="84"/>
    </location>
</feature>
<feature type="domain" description="AB hydrolase-1" evidence="2">
    <location>
        <begin position="137"/>
        <end position="360"/>
    </location>
</feature>
<feature type="modified residue" description="N6-lipoyllysine" evidence="1 3">
    <location>
        <position position="50"/>
    </location>
</feature>
<feature type="sequence conflict" description="In Ref. 1; AAA21950." evidence="5" ref="1">
    <original>D</original>
    <variation>G</variation>
    <location>
        <position position="95"/>
    </location>
</feature>
<feature type="sequence conflict" description="In Ref. 1; AAA21950." evidence="5" ref="1">
    <original>V</original>
    <variation>G</variation>
    <location>
        <position position="121"/>
    </location>
</feature>
<name>ACOC_CUPNH</name>
<proteinExistence type="evidence at protein level"/>